<reference key="1">
    <citation type="journal article" date="2007" name="PLoS Genet.">
        <title>The complete genome sequence of Yersinia pseudotuberculosis IP31758, the causative agent of Far East scarlet-like fever.</title>
        <authorList>
            <person name="Eppinger M."/>
            <person name="Rosovitz M.J."/>
            <person name="Fricke W.F."/>
            <person name="Rasko D.A."/>
            <person name="Kokorina G."/>
            <person name="Fayolle C."/>
            <person name="Lindler L.E."/>
            <person name="Carniel E."/>
            <person name="Ravel J."/>
        </authorList>
    </citation>
    <scope>NUCLEOTIDE SEQUENCE [LARGE SCALE GENOMIC DNA]</scope>
    <source>
        <strain>IP 31758</strain>
    </source>
</reference>
<accession>A7FNA0</accession>
<comment type="function">
    <text evidence="1">Removes the pyruvyl group from chorismate, with concomitant aromatization of the ring, to provide 4-hydroxybenzoate (4HB) for the ubiquinone pathway.</text>
</comment>
<comment type="catalytic activity">
    <reaction evidence="1">
        <text>chorismate = 4-hydroxybenzoate + pyruvate</text>
        <dbReference type="Rhea" id="RHEA:16505"/>
        <dbReference type="ChEBI" id="CHEBI:15361"/>
        <dbReference type="ChEBI" id="CHEBI:17879"/>
        <dbReference type="ChEBI" id="CHEBI:29748"/>
        <dbReference type="EC" id="4.1.3.40"/>
    </reaction>
</comment>
<comment type="pathway">
    <text evidence="1">Cofactor biosynthesis; ubiquinone biosynthesis.</text>
</comment>
<comment type="subunit">
    <text evidence="1">Monomer.</text>
</comment>
<comment type="subcellular location">
    <subcellularLocation>
        <location evidence="1">Cytoplasm</location>
    </subcellularLocation>
</comment>
<comment type="similarity">
    <text evidence="1">Belongs to the UbiC family.</text>
</comment>
<evidence type="ECO:0000255" key="1">
    <source>
        <dbReference type="HAMAP-Rule" id="MF_01632"/>
    </source>
</evidence>
<keyword id="KW-0963">Cytoplasm</keyword>
<keyword id="KW-0456">Lyase</keyword>
<keyword id="KW-0670">Pyruvate</keyword>
<keyword id="KW-0831">Ubiquinone biosynthesis</keyword>
<name>UBIC_YERP3</name>
<feature type="chain" id="PRO_1000069748" description="Chorismate pyruvate-lyase">
    <location>
        <begin position="1"/>
        <end position="174"/>
    </location>
</feature>
<feature type="binding site" evidence="1">
    <location>
        <position position="36"/>
    </location>
    <ligand>
        <name>substrate</name>
    </ligand>
</feature>
<feature type="binding site" evidence="1">
    <location>
        <position position="78"/>
    </location>
    <ligand>
        <name>substrate</name>
    </ligand>
</feature>
<feature type="binding site" evidence="1">
    <location>
        <position position="116"/>
    </location>
    <ligand>
        <name>substrate</name>
    </ligand>
</feature>
<feature type="binding site" evidence="1">
    <location>
        <position position="157"/>
    </location>
    <ligand>
        <name>substrate</name>
    </ligand>
</feature>
<dbReference type="EC" id="4.1.3.40" evidence="1"/>
<dbReference type="EMBL" id="CP000720">
    <property type="protein sequence ID" value="ABS46555.1"/>
    <property type="molecule type" value="Genomic_DNA"/>
</dbReference>
<dbReference type="RefSeq" id="WP_002209087.1">
    <property type="nucleotide sequence ID" value="NC_009708.1"/>
</dbReference>
<dbReference type="SMR" id="A7FNA0"/>
<dbReference type="GeneID" id="57974294"/>
<dbReference type="KEGG" id="ypi:YpsIP31758_3774"/>
<dbReference type="HOGENOM" id="CLU_096824_1_0_6"/>
<dbReference type="UniPathway" id="UPA00232"/>
<dbReference type="Proteomes" id="UP000002412">
    <property type="component" value="Chromosome"/>
</dbReference>
<dbReference type="GO" id="GO:0005829">
    <property type="term" value="C:cytosol"/>
    <property type="evidence" value="ECO:0007669"/>
    <property type="project" value="TreeGrafter"/>
</dbReference>
<dbReference type="GO" id="GO:0008813">
    <property type="term" value="F:chorismate lyase activity"/>
    <property type="evidence" value="ECO:0007669"/>
    <property type="project" value="UniProtKB-UniRule"/>
</dbReference>
<dbReference type="GO" id="GO:0042866">
    <property type="term" value="P:pyruvate biosynthetic process"/>
    <property type="evidence" value="ECO:0007669"/>
    <property type="project" value="UniProtKB-UniRule"/>
</dbReference>
<dbReference type="GO" id="GO:0006744">
    <property type="term" value="P:ubiquinone biosynthetic process"/>
    <property type="evidence" value="ECO:0007669"/>
    <property type="project" value="UniProtKB-UniRule"/>
</dbReference>
<dbReference type="Gene3D" id="3.40.1410.10">
    <property type="entry name" value="Chorismate lyase-like"/>
    <property type="match status" value="1"/>
</dbReference>
<dbReference type="HAMAP" id="MF_01632">
    <property type="entry name" value="UbiC"/>
    <property type="match status" value="1"/>
</dbReference>
<dbReference type="InterPro" id="IPR007440">
    <property type="entry name" value="Chorismate--pyruvate_lyase"/>
</dbReference>
<dbReference type="InterPro" id="IPR028978">
    <property type="entry name" value="Chorismate_lyase_/UTRA_dom_sf"/>
</dbReference>
<dbReference type="NCBIfam" id="NF008656">
    <property type="entry name" value="PRK11655.1"/>
    <property type="match status" value="1"/>
</dbReference>
<dbReference type="PANTHER" id="PTHR38683">
    <property type="entry name" value="CHORISMATE PYRUVATE-LYASE"/>
    <property type="match status" value="1"/>
</dbReference>
<dbReference type="PANTHER" id="PTHR38683:SF1">
    <property type="entry name" value="CHORISMATE PYRUVATE-LYASE"/>
    <property type="match status" value="1"/>
</dbReference>
<dbReference type="Pfam" id="PF04345">
    <property type="entry name" value="Chor_lyase"/>
    <property type="match status" value="1"/>
</dbReference>
<dbReference type="SUPFAM" id="SSF64288">
    <property type="entry name" value="Chorismate lyase-like"/>
    <property type="match status" value="1"/>
</dbReference>
<gene>
    <name evidence="1" type="primary">ubiC</name>
    <name type="ordered locus">YpsIP31758_3774</name>
</gene>
<proteinExistence type="inferred from homology"/>
<protein>
    <recommendedName>
        <fullName evidence="1">Chorismate pyruvate-lyase</fullName>
        <shortName evidence="1">CL</shortName>
        <shortName evidence="1">CPL</shortName>
        <ecNumber evidence="1">4.1.3.40</ecNumber>
    </recommendedName>
</protein>
<organism>
    <name type="scientific">Yersinia pseudotuberculosis serotype O:1b (strain IP 31758)</name>
    <dbReference type="NCBI Taxonomy" id="349747"/>
    <lineage>
        <taxon>Bacteria</taxon>
        <taxon>Pseudomonadati</taxon>
        <taxon>Pseudomonadota</taxon>
        <taxon>Gammaproteobacteria</taxon>
        <taxon>Enterobacterales</taxon>
        <taxon>Yersiniaceae</taxon>
        <taxon>Yersinia</taxon>
    </lineage>
</organism>
<sequence length="174" mass="19916">MFIGDASILKPIQWCATEHPELPADIADWLMELGSMTRRFEQHCQRVHVEPQRECFITRDALGEEAEHLPVSQRYWLREIVLFGDNVPWLLGRTVIPEETLSGPDRALVDLGTLPLGRYLFSGDALTRDYIHVGRQDNLWARRSLLRLSGNPLLLTEVFLPASPLYTHCDSIPK</sequence>